<keyword id="KW-0028">Amino-acid biosynthesis</keyword>
<keyword id="KW-0963">Cytoplasm</keyword>
<keyword id="KW-0368">Histidine biosynthesis</keyword>
<keyword id="KW-0413">Isomerase</keyword>
<organism>
    <name type="scientific">Prochlorococcus marinus (strain AS9601)</name>
    <dbReference type="NCBI Taxonomy" id="146891"/>
    <lineage>
        <taxon>Bacteria</taxon>
        <taxon>Bacillati</taxon>
        <taxon>Cyanobacteriota</taxon>
        <taxon>Cyanophyceae</taxon>
        <taxon>Synechococcales</taxon>
        <taxon>Prochlorococcaceae</taxon>
        <taxon>Prochlorococcus</taxon>
    </lineage>
</organism>
<reference key="1">
    <citation type="journal article" date="2007" name="PLoS Genet.">
        <title>Patterns and implications of gene gain and loss in the evolution of Prochlorococcus.</title>
        <authorList>
            <person name="Kettler G.C."/>
            <person name="Martiny A.C."/>
            <person name="Huang K."/>
            <person name="Zucker J."/>
            <person name="Coleman M.L."/>
            <person name="Rodrigue S."/>
            <person name="Chen F."/>
            <person name="Lapidus A."/>
            <person name="Ferriera S."/>
            <person name="Johnson J."/>
            <person name="Steglich C."/>
            <person name="Church G.M."/>
            <person name="Richardson P."/>
            <person name="Chisholm S.W."/>
        </authorList>
    </citation>
    <scope>NUCLEOTIDE SEQUENCE [LARGE SCALE GENOMIC DNA]</scope>
    <source>
        <strain>AS9601</strain>
    </source>
</reference>
<comment type="catalytic activity">
    <reaction evidence="1">
        <text>1-(5-phospho-beta-D-ribosyl)-5-[(5-phospho-beta-D-ribosylamino)methylideneamino]imidazole-4-carboxamide = 5-[(5-phospho-1-deoxy-D-ribulos-1-ylimino)methylamino]-1-(5-phospho-beta-D-ribosyl)imidazole-4-carboxamide</text>
        <dbReference type="Rhea" id="RHEA:15469"/>
        <dbReference type="ChEBI" id="CHEBI:58435"/>
        <dbReference type="ChEBI" id="CHEBI:58525"/>
        <dbReference type="EC" id="5.3.1.16"/>
    </reaction>
</comment>
<comment type="pathway">
    <text evidence="1">Amino-acid biosynthesis; L-histidine biosynthesis; L-histidine from 5-phospho-alpha-D-ribose 1-diphosphate: step 4/9.</text>
</comment>
<comment type="subcellular location">
    <subcellularLocation>
        <location evidence="1">Cytoplasm</location>
    </subcellularLocation>
</comment>
<comment type="similarity">
    <text evidence="1">Belongs to the HisA/HisF family.</text>
</comment>
<accession>A2BQT3</accession>
<protein>
    <recommendedName>
        <fullName evidence="1">1-(5-phosphoribosyl)-5-[(5-phosphoribosylamino)methylideneamino] imidazole-4-carboxamide isomerase</fullName>
        <ecNumber evidence="1">5.3.1.16</ecNumber>
    </recommendedName>
    <alternativeName>
        <fullName evidence="1">Phosphoribosylformimino-5-aminoimidazole carboxamide ribotide isomerase</fullName>
    </alternativeName>
</protein>
<dbReference type="EC" id="5.3.1.16" evidence="1"/>
<dbReference type="EMBL" id="CP000551">
    <property type="protein sequence ID" value="ABM70144.1"/>
    <property type="molecule type" value="Genomic_DNA"/>
</dbReference>
<dbReference type="RefSeq" id="WP_011818302.1">
    <property type="nucleotide sequence ID" value="NC_008816.1"/>
</dbReference>
<dbReference type="SMR" id="A2BQT3"/>
<dbReference type="STRING" id="146891.A9601_08601"/>
<dbReference type="KEGG" id="pmb:A9601_08601"/>
<dbReference type="eggNOG" id="COG0106">
    <property type="taxonomic scope" value="Bacteria"/>
</dbReference>
<dbReference type="HOGENOM" id="CLU_048577_1_1_3"/>
<dbReference type="OrthoDB" id="9807749at2"/>
<dbReference type="UniPathway" id="UPA00031">
    <property type="reaction ID" value="UER00009"/>
</dbReference>
<dbReference type="Proteomes" id="UP000002590">
    <property type="component" value="Chromosome"/>
</dbReference>
<dbReference type="GO" id="GO:0005737">
    <property type="term" value="C:cytoplasm"/>
    <property type="evidence" value="ECO:0007669"/>
    <property type="project" value="UniProtKB-SubCell"/>
</dbReference>
<dbReference type="GO" id="GO:0003949">
    <property type="term" value="F:1-(5-phosphoribosyl)-5-[(5-phosphoribosylamino)methylideneamino]imidazole-4-carboxamide isomerase activity"/>
    <property type="evidence" value="ECO:0007669"/>
    <property type="project" value="UniProtKB-UniRule"/>
</dbReference>
<dbReference type="GO" id="GO:0000105">
    <property type="term" value="P:L-histidine biosynthetic process"/>
    <property type="evidence" value="ECO:0007669"/>
    <property type="project" value="UniProtKB-UniRule"/>
</dbReference>
<dbReference type="GO" id="GO:0000162">
    <property type="term" value="P:L-tryptophan biosynthetic process"/>
    <property type="evidence" value="ECO:0007669"/>
    <property type="project" value="TreeGrafter"/>
</dbReference>
<dbReference type="CDD" id="cd04732">
    <property type="entry name" value="HisA"/>
    <property type="match status" value="1"/>
</dbReference>
<dbReference type="FunFam" id="3.20.20.70:FF:000009">
    <property type="entry name" value="1-(5-phosphoribosyl)-5-[(5-phosphoribosylamino)methylideneamino] imidazole-4-carboxamide isomerase"/>
    <property type="match status" value="1"/>
</dbReference>
<dbReference type="Gene3D" id="3.20.20.70">
    <property type="entry name" value="Aldolase class I"/>
    <property type="match status" value="1"/>
</dbReference>
<dbReference type="HAMAP" id="MF_01014">
    <property type="entry name" value="HisA"/>
    <property type="match status" value="1"/>
</dbReference>
<dbReference type="InterPro" id="IPR013785">
    <property type="entry name" value="Aldolase_TIM"/>
</dbReference>
<dbReference type="InterPro" id="IPR006062">
    <property type="entry name" value="His_biosynth"/>
</dbReference>
<dbReference type="InterPro" id="IPR006063">
    <property type="entry name" value="HisA_bact_arch"/>
</dbReference>
<dbReference type="InterPro" id="IPR044524">
    <property type="entry name" value="Isoase_HisA-like"/>
</dbReference>
<dbReference type="InterPro" id="IPR023016">
    <property type="entry name" value="Isoase_HisA-like_bact"/>
</dbReference>
<dbReference type="InterPro" id="IPR011060">
    <property type="entry name" value="RibuloseP-bd_barrel"/>
</dbReference>
<dbReference type="NCBIfam" id="TIGR00007">
    <property type="entry name" value="1-(5-phosphoribosyl)-5-[(5-phosphoribosylamino)methylideneamino]imidazole-4-carboxamide isomerase"/>
    <property type="match status" value="1"/>
</dbReference>
<dbReference type="PANTHER" id="PTHR43090">
    <property type="entry name" value="1-(5-PHOSPHORIBOSYL)-5-[(5-PHOSPHORIBOSYLAMINO)METHYLIDENEAMINO] IMIDAZOLE-4-CARBOXAMIDE ISOMERASE"/>
    <property type="match status" value="1"/>
</dbReference>
<dbReference type="PANTHER" id="PTHR43090:SF2">
    <property type="entry name" value="1-(5-PHOSPHORIBOSYL)-5-[(5-PHOSPHORIBOSYLAMINO)METHYLIDENEAMINO] IMIDAZOLE-4-CARBOXAMIDE ISOMERASE"/>
    <property type="match status" value="1"/>
</dbReference>
<dbReference type="Pfam" id="PF00977">
    <property type="entry name" value="His_biosynth"/>
    <property type="match status" value="1"/>
</dbReference>
<dbReference type="SUPFAM" id="SSF51366">
    <property type="entry name" value="Ribulose-phoshate binding barrel"/>
    <property type="match status" value="1"/>
</dbReference>
<feature type="chain" id="PRO_0000290507" description="1-(5-phosphoribosyl)-5-[(5-phosphoribosylamino)methylideneamino] imidazole-4-carboxamide isomerase">
    <location>
        <begin position="1"/>
        <end position="255"/>
    </location>
</feature>
<feature type="active site" description="Proton acceptor" evidence="1">
    <location>
        <position position="8"/>
    </location>
</feature>
<feature type="active site" description="Proton donor" evidence="1">
    <location>
        <position position="129"/>
    </location>
</feature>
<proteinExistence type="inferred from homology"/>
<sequence length="255" mass="28172">MDLIPAIDLMNGKCVRLFKGDFNKRKDFAKEPHEQAEFWEREGAKYIHIVDLDAAKTGSPTNDKSIKKIAKTVNIPIQIGGGIRSQERIEQLFSYGVEKVIMGTSAIENKELVKDLSNKFPGRIIVGIDAKDGKVSTRGWLEQSNIFATDLVKEFSSFKIASFIVTDINTDGTLEGTNEEFIKSILEITDIPVIASGGVGSISDLLSLVKFENSGLFGVIVGKALYENKFTINEANNVLSAERLNDIDLNTNYYA</sequence>
<name>HIS4_PROMS</name>
<gene>
    <name evidence="1" type="primary">hisA</name>
    <name type="ordered locus">A9601_08601</name>
</gene>
<evidence type="ECO:0000255" key="1">
    <source>
        <dbReference type="HAMAP-Rule" id="MF_01014"/>
    </source>
</evidence>